<keyword id="KW-0274">FAD</keyword>
<keyword id="KW-0285">Flavoprotein</keyword>
<keyword id="KW-0325">Glycoprotein</keyword>
<keyword id="KW-0472">Membrane</keyword>
<keyword id="KW-0503">Monooxygenase</keyword>
<keyword id="KW-0560">Oxidoreductase</keyword>
<keyword id="KW-1185">Reference proteome</keyword>
<keyword id="KW-0812">Transmembrane</keyword>
<keyword id="KW-1133">Transmembrane helix</keyword>
<proteinExistence type="evidence at protein level"/>
<comment type="function">
    <text evidence="4 5 8">FAD-dependent monooxygenase; part of the cluster B that mediates the biosynthesis of azasperpyranones, members of the azaphilone family that exhibit anti-cancer activities (PubMed:31908094). Azasperpyranones are synthesized by 2 clusters, A and B (PubMed:31908094). Cluster A is responsible for the production of the polyhydric phenol moiety while the azaphilonoid scaffold is produced by the cluster B (PubMed:31908094). The non-reducing polyketide synthase ATEG_03629 produces 5-methyl orsellinic acid, which is then reduced to 5-methyl orsellinic aldehyde by the NRPS-like protein ATEG_03630 (PubMed:24412543). 5-methyl orsellinic aldehyde is then first hydroxylated by the FAD-dependent monooxygenase ATEG_03635 and subsequently hydroxylated by the cytochrome P450 monooxygenase ATEG_03631 to produce the unstable polyhydric phenol precursor of azasperpyranones (PubMed:31908094). On the other hand, the polyketide synthase ATEG_07659 is responsible for producing the 3,5-dimethyloctadienone moiety from acetyl-CoA, three malonyl-CoA, and two S-adenosyl methionines (SAM) (Probable). The 3,5-dimethyloctadienone moiety is then loaded onto the SAT domain of ATEG_07661 and extended with four malonyl-CoA and one SAM, which leads to the formation of 2,4-dihydroxy-6-(5,7-dimethyl-2-oxo-trans-3-trans-5-nonadienyl)-3-methylbenzaldehyde (compound 8) after reductive release and aldol condensation (Probable). The FAD-dependent monooxygenase ATEG_07662 is the next enzyme in the biosynthesis sequence and hydroxylates the side chain at the benzylic position of compound 8 (Probable). In Aspergillus nidulans, afoF, the ortholog of the FAD-dependent oxygenase ATEG_07660, is the key enzyme for the biosynthesis of asperfuranone by catalyzing the hydroxylation at C-8 of to prevent the formation of a six-membered ring hemiacetal intermediate and thus facilitating the formation of a five-membered ring to produce asperfuranone (Probable). In Aspergillus terreus, ATEG_07660 is probably not functional, which leads to the formation of the six-membered ring hemiacetal intermediate presperpyranone instead of asperfuranone (Probable). Finally, ATEG_03636 is involved in the condensation of the polyhydric phenol moiety produced by cluster A and the perasperpyranone precursor produced by cluster B, to yield azasperpyranone A (Probable). Further modifications of azasperpyranone A result in the production of derivatives, including azasperpyranone B to F (PubMed:31908094).</text>
</comment>
<comment type="cofactor">
    <cofactor evidence="7">
        <name>FAD</name>
        <dbReference type="ChEBI" id="CHEBI:57692"/>
    </cofactor>
</comment>
<comment type="pathway">
    <text evidence="5">Secondary metabolite biosynthesis.</text>
</comment>
<comment type="subcellular location">
    <subcellularLocation>
        <location evidence="2">Membrane</location>
        <topology evidence="2">Single-pass membrane protein</topology>
    </subcellularLocation>
</comment>
<comment type="induction">
    <text evidence="5">Expression is induced by the azasperpyranone cluster A-specific transcription factor ATEG_07666 which is itself regulated by the azasperpyranone transcriptional regulator ATEG_07667.</text>
</comment>
<comment type="disruption phenotype">
    <text evidence="5">Abolishes the production of azasperpyranone A.</text>
</comment>
<comment type="biotechnology">
    <text evidence="5">Azasperpyranones display potential anti-cancer activities (PubMed:31908094). Azasperpyranones A, C, D, and F exhibit potent growth-inhibitory activity against the A549, HepG2, HCT-116, and HL-60 cell lines, with IC(50) values of 2.39-14.42 mm, respectively (PubMed:31908094). Moreover, azasperpyranone D significantly inhibits HCT-116 xenograft tumor growth in BALB/c-nu mice (PubMed:31908094). In addition, azasperpyranones A and C can bind with four kinds of therapeutic targets for cancer, eEF2K, FGFR, survivin, and TNF-a (PubMed:31908094).</text>
</comment>
<comment type="similarity">
    <text evidence="7">Belongs to the paxM FAD-dependent monooxygenase family.</text>
</comment>
<feature type="chain" id="PRO_0000450090" description="FAD-dependent monooxygenase ATEG_07662">
    <location>
        <begin position="1"/>
        <end position="435"/>
    </location>
</feature>
<feature type="transmembrane region" description="Helical" evidence="2">
    <location>
        <begin position="8"/>
        <end position="28"/>
    </location>
</feature>
<feature type="active site" evidence="1">
    <location>
        <position position="201"/>
    </location>
</feature>
<feature type="binding site" evidence="1">
    <location>
        <position position="38"/>
    </location>
    <ligand>
        <name>FAD</name>
        <dbReference type="ChEBI" id="CHEBI:57692"/>
    </ligand>
</feature>
<feature type="binding site" evidence="1">
    <location>
        <position position="51"/>
    </location>
    <ligand>
        <name>FAD</name>
        <dbReference type="ChEBI" id="CHEBI:57692"/>
    </ligand>
</feature>
<feature type="binding site" evidence="1">
    <location>
        <position position="119"/>
    </location>
    <ligand>
        <name>FAD</name>
        <dbReference type="ChEBI" id="CHEBI:57692"/>
    </ligand>
</feature>
<feature type="binding site" evidence="1">
    <location>
        <position position="317"/>
    </location>
    <ligand>
        <name>FAD</name>
        <dbReference type="ChEBI" id="CHEBI:57692"/>
    </ligand>
</feature>
<feature type="binding site" evidence="1">
    <location>
        <position position="330"/>
    </location>
    <ligand>
        <name>FAD</name>
        <dbReference type="ChEBI" id="CHEBI:57692"/>
    </ligand>
</feature>
<feature type="glycosylation site" description="N-linked (GlcNAc...) asparagine" evidence="3">
    <location>
        <position position="191"/>
    </location>
</feature>
<dbReference type="EC" id="1.-.-.-" evidence="8"/>
<dbReference type="EMBL" id="CH476604">
    <property type="protein sequence ID" value="EAU31924.1"/>
    <property type="molecule type" value="Genomic_DNA"/>
</dbReference>
<dbReference type="RefSeq" id="XP_001216283.1">
    <property type="nucleotide sequence ID" value="XM_001216283.1"/>
</dbReference>
<dbReference type="SMR" id="Q0CF72"/>
<dbReference type="STRING" id="341663.Q0CF72"/>
<dbReference type="EnsemblFungi" id="EAU31924">
    <property type="protein sequence ID" value="EAU31924"/>
    <property type="gene ID" value="ATEG_07662"/>
</dbReference>
<dbReference type="GeneID" id="4323015"/>
<dbReference type="VEuPathDB" id="FungiDB:ATEG_07662"/>
<dbReference type="eggNOG" id="KOG2614">
    <property type="taxonomic scope" value="Eukaryota"/>
</dbReference>
<dbReference type="HOGENOM" id="CLU_009665_6_3_1"/>
<dbReference type="OMA" id="WSCLRSH"/>
<dbReference type="OrthoDB" id="417877at2759"/>
<dbReference type="Proteomes" id="UP000007963">
    <property type="component" value="Unassembled WGS sequence"/>
</dbReference>
<dbReference type="GO" id="GO:0016020">
    <property type="term" value="C:membrane"/>
    <property type="evidence" value="ECO:0007669"/>
    <property type="project" value="UniProtKB-SubCell"/>
</dbReference>
<dbReference type="GO" id="GO:0071949">
    <property type="term" value="F:FAD binding"/>
    <property type="evidence" value="ECO:0007669"/>
    <property type="project" value="InterPro"/>
</dbReference>
<dbReference type="GO" id="GO:0004497">
    <property type="term" value="F:monooxygenase activity"/>
    <property type="evidence" value="ECO:0007669"/>
    <property type="project" value="UniProtKB-KW"/>
</dbReference>
<dbReference type="GO" id="GO:0044550">
    <property type="term" value="P:secondary metabolite biosynthetic process"/>
    <property type="evidence" value="ECO:0007669"/>
    <property type="project" value="TreeGrafter"/>
</dbReference>
<dbReference type="FunFam" id="3.50.50.60:FF:000153">
    <property type="entry name" value="Salicylate hydroxylase, putative"/>
    <property type="match status" value="1"/>
</dbReference>
<dbReference type="Gene3D" id="3.50.50.60">
    <property type="entry name" value="FAD/NAD(P)-binding domain"/>
    <property type="match status" value="1"/>
</dbReference>
<dbReference type="InterPro" id="IPR002938">
    <property type="entry name" value="FAD-bd"/>
</dbReference>
<dbReference type="InterPro" id="IPR036188">
    <property type="entry name" value="FAD/NAD-bd_sf"/>
</dbReference>
<dbReference type="InterPro" id="IPR051104">
    <property type="entry name" value="FAD_monoxygenase"/>
</dbReference>
<dbReference type="PANTHER" id="PTHR46720:SF3">
    <property type="entry name" value="FAD-BINDING DOMAIN-CONTAINING PROTEIN-RELATED"/>
    <property type="match status" value="1"/>
</dbReference>
<dbReference type="PANTHER" id="PTHR46720">
    <property type="entry name" value="HYDROXYLASE, PUTATIVE (AFU_ORTHOLOGUE AFUA_3G01460)-RELATED"/>
    <property type="match status" value="1"/>
</dbReference>
<dbReference type="Pfam" id="PF01494">
    <property type="entry name" value="FAD_binding_3"/>
    <property type="match status" value="1"/>
</dbReference>
<dbReference type="PRINTS" id="PR00420">
    <property type="entry name" value="RNGMNOXGNASE"/>
</dbReference>
<dbReference type="SUPFAM" id="SSF54373">
    <property type="entry name" value="FAD-linked reductases, C-terminal domain"/>
    <property type="match status" value="1"/>
</dbReference>
<dbReference type="SUPFAM" id="SSF51905">
    <property type="entry name" value="FAD/NAD(P)-binding domain"/>
    <property type="match status" value="1"/>
</dbReference>
<organism>
    <name type="scientific">Aspergillus terreus (strain NIH 2624 / FGSC A1156)</name>
    <dbReference type="NCBI Taxonomy" id="341663"/>
    <lineage>
        <taxon>Eukaryota</taxon>
        <taxon>Fungi</taxon>
        <taxon>Dikarya</taxon>
        <taxon>Ascomycota</taxon>
        <taxon>Pezizomycotina</taxon>
        <taxon>Eurotiomycetes</taxon>
        <taxon>Eurotiomycetidae</taxon>
        <taxon>Eurotiales</taxon>
        <taxon>Aspergillaceae</taxon>
        <taxon>Aspergillus</taxon>
        <taxon>Aspergillus subgen. Circumdati</taxon>
    </lineage>
</organism>
<gene>
    <name type="ORF">ATEG_07662</name>
</gene>
<sequence>MTVADRAPLDVAIIGGGIIGIMTALGLLHRGFRVTVYERAASWPEIGAAFAFTGVARQCMERLDPRVLESLARVAQRSPHEKVRYWDGFHPRTKEAAQEESAVLFEILEKHMAYWACIRGHFLLDMAAQLPDGVVQFGKRLVDYNDDEANEKVVLCFADGSTAESDVVIACDGIHSATRKVLLGVDHPAANASYSRKSMYRAMVPMADAVSALGTEKAHVQIAHLGPDAHVVSFPVNNGQVYNVFLFLHDPNEWDHGHTMTVPSSRSEVMDAIQGWGPHIKEIVSCFPETVSKYAIFDQADNPLPYYASGRVCLAGDAAHASSPFHGAGACMGVEDALVLAELLGLVDAGPVAARQRNIKAALQTYSSVRIERSQWLVQSSRDMGDLYEWRYPPTGEDGAKCKAEFERRSKVIWDFDVDGMVAGAKKKYEHSMEA</sequence>
<protein>
    <recommendedName>
        <fullName evidence="6">FAD-dependent monooxygenase ATEG_07662</fullName>
        <ecNumber evidence="8">1.-.-.-</ecNumber>
    </recommendedName>
    <alternativeName>
        <fullName evidence="6">Azasperpyranone A biosynthesis cluster B protein ATEG_07662</fullName>
    </alternativeName>
</protein>
<name>AZPB4_ASPTN</name>
<evidence type="ECO:0000250" key="1">
    <source>
        <dbReference type="UniProtKB" id="B8M9J8"/>
    </source>
</evidence>
<evidence type="ECO:0000255" key="2"/>
<evidence type="ECO:0000255" key="3">
    <source>
        <dbReference type="PROSITE-ProRule" id="PRU00498"/>
    </source>
</evidence>
<evidence type="ECO:0000269" key="4">
    <source>
    </source>
</evidence>
<evidence type="ECO:0000269" key="5">
    <source>
    </source>
</evidence>
<evidence type="ECO:0000303" key="6">
    <source>
    </source>
</evidence>
<evidence type="ECO:0000305" key="7"/>
<evidence type="ECO:0000305" key="8">
    <source>
    </source>
</evidence>
<accession>Q0CF72</accession>
<reference key="1">
    <citation type="submission" date="2005-09" db="EMBL/GenBank/DDBJ databases">
        <title>Annotation of the Aspergillus terreus NIH2624 genome.</title>
        <authorList>
            <person name="Birren B.W."/>
            <person name="Lander E.S."/>
            <person name="Galagan J.E."/>
            <person name="Nusbaum C."/>
            <person name="Devon K."/>
            <person name="Henn M."/>
            <person name="Ma L.-J."/>
            <person name="Jaffe D.B."/>
            <person name="Butler J."/>
            <person name="Alvarez P."/>
            <person name="Gnerre S."/>
            <person name="Grabherr M."/>
            <person name="Kleber M."/>
            <person name="Mauceli E.W."/>
            <person name="Brockman W."/>
            <person name="Rounsley S."/>
            <person name="Young S.K."/>
            <person name="LaButti K."/>
            <person name="Pushparaj V."/>
            <person name="DeCaprio D."/>
            <person name="Crawford M."/>
            <person name="Koehrsen M."/>
            <person name="Engels R."/>
            <person name="Montgomery P."/>
            <person name="Pearson M."/>
            <person name="Howarth C."/>
            <person name="Larson L."/>
            <person name="Luoma S."/>
            <person name="White J."/>
            <person name="Alvarado L."/>
            <person name="Kodira C.D."/>
            <person name="Zeng Q."/>
            <person name="Oleary S."/>
            <person name="Yandava C."/>
            <person name="Denning D.W."/>
            <person name="Nierman W.C."/>
            <person name="Milne T."/>
            <person name="Madden K."/>
        </authorList>
    </citation>
    <scope>NUCLEOTIDE SEQUENCE [LARGE SCALE GENOMIC DNA]</scope>
    <source>
        <strain>NIH 2624 / FGSC A1156</strain>
    </source>
</reference>
<reference key="2">
    <citation type="journal article" date="2014" name="Chem. Biol.">
        <title>Aryl-aldehyde formation in fungal polyketides: discovery and characterization of a distinct biosynthetic mechanism.</title>
        <authorList>
            <person name="Wang M."/>
            <person name="Beissner M."/>
            <person name="Zhao H."/>
        </authorList>
    </citation>
    <scope>FUNCTION</scope>
</reference>
<reference key="3">
    <citation type="journal article" date="2013" name="J. Am. Chem. Soc.">
        <title>An efficient system for heterologous expression of secondary metabolite genes in Aspergillus nidulans.</title>
        <authorList>
            <person name="Chiang Y.M."/>
            <person name="Oakley C.E."/>
            <person name="Ahuja M."/>
            <person name="Entwistle R."/>
            <person name="Schultz A."/>
            <person name="Chang S.L."/>
            <person name="Sung C.T."/>
            <person name="Wang C.C."/>
            <person name="Oakley B.R."/>
        </authorList>
    </citation>
    <scope>FUNCTION</scope>
</reference>
<reference key="4">
    <citation type="journal article" date="2020" name="Angew. Chem. Int. Ed.">
        <title>Collaborative biosynthesis of a class of bioactive azaphilones by two separate gene clusters containing four PKS/NRPSs with transcriptional cosstalk in fungi.</title>
        <authorList>
            <person name="Huang X."/>
            <person name="Zhang W."/>
            <person name="Tang S."/>
            <person name="Wei S."/>
            <person name="Lu X."/>
        </authorList>
    </citation>
    <scope>FUNCTION</scope>
    <scope>INDUCTION</scope>
    <scope>DISRUPTION PHENOTYPE</scope>
    <scope>PATHWAY</scope>
    <scope>BIOTECHNOLOGY</scope>
</reference>